<feature type="chain" id="PRO_0000201523" description="Bacterial microcompartment shell protein EutS">
    <location>
        <begin position="1"/>
        <end position="111"/>
    </location>
</feature>
<feature type="domain" description="BMC circularly permuted" evidence="2">
    <location>
        <begin position="5"/>
        <end position="103"/>
    </location>
</feature>
<feature type="mutagenesis site" description="EutC and EutE constructs are no longer targeted to EutS or eutSMNLK BMCs. BMCs are formed in E.coli by both sets of genes." evidence="9">
    <original>L</original>
    <variation>A</variation>
    <location>
        <position position="29"/>
    </location>
</feature>
<feature type="mutagenesis site" description="EutC constructs are targeted to EutS BMCs, cells are somewhat elongated." evidence="9">
    <original>K</original>
    <variation>A</variation>
    <location>
        <position position="32"/>
    </location>
</feature>
<feature type="mutagenesis site" description="No longer targets EutC-tagged constructs to BMCs, probably forms flat symmetric hexamers." evidence="6">
    <original>G</original>
    <variation>V</variation>
    <location>
        <position position="39"/>
    </location>
</feature>
<dbReference type="EMBL" id="AF093749">
    <property type="protein sequence ID" value="AAC78111.1"/>
    <property type="molecule type" value="Genomic_DNA"/>
</dbReference>
<dbReference type="EMBL" id="AE006468">
    <property type="protein sequence ID" value="AAL21364.1"/>
    <property type="molecule type" value="Genomic_DNA"/>
</dbReference>
<dbReference type="RefSeq" id="NP_461405.1">
    <property type="nucleotide sequence ID" value="NC_003197.2"/>
</dbReference>
<dbReference type="RefSeq" id="WP_001031445.1">
    <property type="nucleotide sequence ID" value="NC_003197.2"/>
</dbReference>
<dbReference type="SMR" id="Q9ZFV7"/>
<dbReference type="STRING" id="99287.STM2470"/>
<dbReference type="PaxDb" id="99287-STM2470"/>
<dbReference type="GeneID" id="1253992"/>
<dbReference type="KEGG" id="stm:STM2470"/>
<dbReference type="PATRIC" id="fig|99287.12.peg.2608"/>
<dbReference type="HOGENOM" id="CLU_143326_0_0_6"/>
<dbReference type="OMA" id="IHRIMNT"/>
<dbReference type="PhylomeDB" id="Q9ZFV7"/>
<dbReference type="BioCyc" id="SENT99287:STM2470-MONOMER"/>
<dbReference type="UniPathway" id="UPA00560"/>
<dbReference type="Proteomes" id="UP000001014">
    <property type="component" value="Chromosome"/>
</dbReference>
<dbReference type="GO" id="GO:0031471">
    <property type="term" value="C:ethanolamine degradation polyhedral organelle"/>
    <property type="evidence" value="ECO:0000314"/>
    <property type="project" value="UniProtKB"/>
</dbReference>
<dbReference type="GO" id="GO:0046336">
    <property type="term" value="P:ethanolamine catabolic process"/>
    <property type="evidence" value="ECO:0007669"/>
    <property type="project" value="UniProtKB-UniPathway"/>
</dbReference>
<dbReference type="GO" id="GO:0006091">
    <property type="term" value="P:generation of precursor metabolites and energy"/>
    <property type="evidence" value="ECO:0000315"/>
    <property type="project" value="UniProtKB"/>
</dbReference>
<dbReference type="CDD" id="cd07046">
    <property type="entry name" value="BMC_PduU-EutS"/>
    <property type="match status" value="1"/>
</dbReference>
<dbReference type="FunFam" id="3.30.70.1710:FF:000002">
    <property type="entry name" value="Ethanolamine utilization protein EutS"/>
    <property type="match status" value="1"/>
</dbReference>
<dbReference type="Gene3D" id="3.30.70.1710">
    <property type="match status" value="1"/>
</dbReference>
<dbReference type="InterPro" id="IPR044870">
    <property type="entry name" value="BMC_CP"/>
</dbReference>
<dbReference type="InterPro" id="IPR000249">
    <property type="entry name" value="BMC_dom"/>
</dbReference>
<dbReference type="InterPro" id="IPR037233">
    <property type="entry name" value="CcmK-like_sf"/>
</dbReference>
<dbReference type="InterPro" id="IPR009307">
    <property type="entry name" value="EutS/PduU/CutR"/>
</dbReference>
<dbReference type="NCBIfam" id="NF012012">
    <property type="entry name" value="PRK15468.1"/>
    <property type="match status" value="1"/>
</dbReference>
<dbReference type="PANTHER" id="PTHR40449:SF2">
    <property type="entry name" value="BACTERIAL MICROCOMPARTMENT SHELL PROTEIN EUTS"/>
    <property type="match status" value="1"/>
</dbReference>
<dbReference type="PANTHER" id="PTHR40449">
    <property type="entry name" value="ETHANOLAMINE UTILIZATION PROTEIN EUTS"/>
    <property type="match status" value="1"/>
</dbReference>
<dbReference type="Pfam" id="PF00936">
    <property type="entry name" value="BMC"/>
    <property type="match status" value="1"/>
</dbReference>
<dbReference type="PIRSF" id="PIRSF012296">
    <property type="entry name" value="EutS_PduU"/>
    <property type="match status" value="1"/>
</dbReference>
<dbReference type="SMART" id="SM00877">
    <property type="entry name" value="BMC"/>
    <property type="match status" value="1"/>
</dbReference>
<dbReference type="SUPFAM" id="SSF143414">
    <property type="entry name" value="CcmK-like"/>
    <property type="match status" value="1"/>
</dbReference>
<dbReference type="PROSITE" id="PS51931">
    <property type="entry name" value="BMC_CP"/>
    <property type="match status" value="1"/>
</dbReference>
<organism>
    <name type="scientific">Salmonella typhimurium (strain LT2 / SGSC1412 / ATCC 700720)</name>
    <dbReference type="NCBI Taxonomy" id="99287"/>
    <lineage>
        <taxon>Bacteria</taxon>
        <taxon>Pseudomonadati</taxon>
        <taxon>Pseudomonadota</taxon>
        <taxon>Gammaproteobacteria</taxon>
        <taxon>Enterobacterales</taxon>
        <taxon>Enterobacteriaceae</taxon>
        <taxon>Salmonella</taxon>
    </lineage>
</organism>
<name>EUTS_SALTY</name>
<sequence>MNKERIIQEFVPGKQVTLAHLIAHPGEELAKKIGVPDAGAIGIMTLTPGETAMIAGDLAMKAADVHIGFLDRFSGALVIYGTVGAVEEALLQTVSGLGRLLNFTLCELTKS</sequence>
<gene>
    <name type="primary">eutS</name>
    <name type="ordered locus">STM2470</name>
</gene>
<protein>
    <recommendedName>
        <fullName>Bacterial microcompartment shell protein EutS</fullName>
    </recommendedName>
    <alternativeName>
        <fullName>Ethanolamine utilization protein EutS</fullName>
    </alternativeName>
</protein>
<accession>Q9ZFV7</accession>
<comment type="function">
    <text evidence="6 8 9 12">A probably major component of the bacterial microcompartment (BMC) shell dedicated to ethanolamine degradation. Expression of eutK, eutL, eutM, eutN, eutS (eutSMNLK) in E.coli leads to formation of a single BMC; expression of this protein alone can also form BMCs (which may be less tightly closed than eutSMNLK shells). The 'bent' shape of this subunit is required for integration of cargo proteins into these BMCs (PubMed:22428024). Coexpression of eutQ with eutSMNLK permits E.coli to make cells with more than one mobile BMC, as is usual in vivo (PubMed:27063436). Targets at least 2 proteins (EutC and EutE) to the interior of the BMC (PubMed:22428024, PubMed:27063436, PubMed:27450681). Proteins such as EutS containing circularly permuted BMC domains may play a key role in conferring heterogeneity and flexibility in this BMC (Probable).</text>
</comment>
<comment type="function">
    <text evidence="5 13 14 16">The ethanolamine (EA) catabolic bacterial microcompartment (BMC) probably concentrates low levels of ethanolamine catabolic enzymes, concentrates volatile reaction intermediates, keeps the level of toxic acetaldehyde low, generates enough acetyl-CoA to support cell growth, and maintains a pool of free coenzyme A (CoA) and NAD.</text>
</comment>
<comment type="function">
    <text evidence="10 11">Expression of the eut operon allows this bacteria to use ethanolamine as a carbon, nitrogen and energy source. It relies on cobalamin (vitamin B12) both as a cofactor for the ethanolamine ammonia-lyase (EAL) activity and to induce the operon (PubMed:3045078). EA enhances bacterial survival in macrophages in a concentration-dependent manner, suggesting it is an important nutrient during infection (PubMed:29531136).</text>
</comment>
<comment type="pathway">
    <text evidence="11">Amine and polyamine degradation; ethanolamine degradation.</text>
</comment>
<comment type="subunit">
    <text evidence="6 8 9 15">Homohexamer with a central pore; the hexamer is probably bent by about 40 degrees rather that symmetric; bending depends on Gly-39 (Probable). Interacts with the N-terminus of EutC, targeting it to the interior of the BMC (PubMed:22428024, PubMed:27063436, PubMed:27450681). Interacts with the N-terminus of EutE, targeting it to the interior of the BMC (PubMed:27450681).</text>
</comment>
<comment type="subcellular location">
    <subcellularLocation>
        <location evidence="6 8 9">Bacterial microcompartment</location>
    </subcellularLocation>
</comment>
<comment type="induction">
    <text evidence="7 11">The first gene of the 17-gene eut operon transcribed from a single promoter, induced by ethanolamine and adenosylcobalamin (AdoCbl, vitamin B12) (PubMed:3045078). Expressed at low levels following mouse infection, not induced in infected macrophages or in spleen (PubMed:26565973).</text>
</comment>
<comment type="domain">
    <text evidence="1 9">Adding an N- or C-terminal His-tag to this protein prevents it forming BMCs (PubMed:27450681). One side of the hexamer is concave and lined by hydrophobic residues, the other side has a slightly protruding, 6-stranded beta-barrel (By similarity).</text>
</comment>
<comment type="disruption phenotype">
    <text evidence="3 4 5">Not required for aerobic growth on ethanolamine (EA) supplemented with cobalamin (vitamin B12) (PubMed:10464203, PubMed:16291677). A non-polar deletion mutant grows on EA from pH 5.5 to pH 8.0, but does not grow at pH 8.5, releases increased amounts of acetaldehyde on EA plus vitamin B12 (PubMed:16585748).</text>
</comment>
<comment type="biotechnology">
    <text evidence="6 8">Artificial BMCs can be made in E.coli by expressing eutK, eutL, eutM, eutN, eutS (eutSMNLK) or eutS alone. Cargo proteins can be targeted to both BMCs; beta-galactosidase (lacZ) was active within the BMC, showing the BMC allows passage of substrate into the interior. This can lead to the development of tailored BMCs for specific metabolic reactions (PubMed:22428024, PubMed:27063436). The addition of eutQ to the eutSMNLK construct results in biogenesis of multiple BMCs (PubMed:27063436).</text>
</comment>
<comment type="miscellaneous">
    <text evidence="4">The need for a bacterial microcompartment in EA metabolism can be bypassed by increasing the levels of EAL and an acetaldehyde dehydrogenase (not necessarily EutE).</text>
</comment>
<comment type="similarity">
    <text evidence="2">Belongs to the EutS/PduU family.</text>
</comment>
<proteinExistence type="evidence at protein level"/>
<reference key="1">
    <citation type="journal article" date="1999" name="J. Bacteriol.">
        <title>The 17-gene ethanolamine (eut) operon of Salmonella typhimurium encodes five homologues of carboxysome shell proteins.</title>
        <authorList>
            <person name="Kofoid E.C."/>
            <person name="Rappleye C.A."/>
            <person name="Stojiljkovic I."/>
            <person name="Roth J.R."/>
        </authorList>
    </citation>
    <scope>NUCLEOTIDE SEQUENCE [GENOMIC DNA]</scope>
    <scope>DISRUPTION PHENOTYPE</scope>
    <source>
        <strain>LT2</strain>
    </source>
</reference>
<reference key="2">
    <citation type="journal article" date="2001" name="Nature">
        <title>Complete genome sequence of Salmonella enterica serovar Typhimurium LT2.</title>
        <authorList>
            <person name="McClelland M."/>
            <person name="Sanderson K.E."/>
            <person name="Spieth J."/>
            <person name="Clifton S.W."/>
            <person name="Latreille P."/>
            <person name="Courtney L."/>
            <person name="Porwollik S."/>
            <person name="Ali J."/>
            <person name="Dante M."/>
            <person name="Du F."/>
            <person name="Hou S."/>
            <person name="Layman D."/>
            <person name="Leonard S."/>
            <person name="Nguyen C."/>
            <person name="Scott K."/>
            <person name="Holmes A."/>
            <person name="Grewal N."/>
            <person name="Mulvaney E."/>
            <person name="Ryan E."/>
            <person name="Sun H."/>
            <person name="Florea L."/>
            <person name="Miller W."/>
            <person name="Stoneking T."/>
            <person name="Nhan M."/>
            <person name="Waterston R."/>
            <person name="Wilson R.K."/>
        </authorList>
    </citation>
    <scope>NUCLEOTIDE SEQUENCE [LARGE SCALE GENOMIC DNA]</scope>
    <source>
        <strain>LT2 / SGSC1412 / ATCC 700720</strain>
    </source>
</reference>
<reference key="3">
    <citation type="journal article" date="1988" name="J. Bacteriol.">
        <title>Ethanolamine utilization in Salmonella typhimurium.</title>
        <authorList>
            <person name="Roof D.M."/>
            <person name="Roth J.R."/>
        </authorList>
    </citation>
    <scope>FUNCTION</scope>
    <scope>PATHWAY</scope>
    <scope>OPERON</scope>
    <scope>INDUCTION BY ETHANOLAMINE AND COBALAMIN</scope>
    <source>
        <strain>LT2</strain>
    </source>
</reference>
<reference key="4">
    <citation type="journal article" date="2005" name="J. Bacteriol.">
        <title>Minimal functions and physiological conditions required for growth of salmonella enterica on ethanolamine in the absence of the metabolosome.</title>
        <authorList>
            <person name="Brinsmade S.R."/>
            <person name="Paldon T."/>
            <person name="Escalante-Semerena J.C."/>
        </authorList>
    </citation>
    <scope>FUNCTION</scope>
    <scope>DISRUPTION PHENOTYPE</scope>
    <source>
        <strain>LT2</strain>
    </source>
</reference>
<reference key="5">
    <citation type="journal article" date="2006" name="J. Bacteriol.">
        <title>Conserving a volatile metabolite: a role for carboxysome-like organelles in Salmonella enterica.</title>
        <authorList>
            <person name="Penrod J.T."/>
            <person name="Roth J.R."/>
        </authorList>
    </citation>
    <scope>FUNCTION</scope>
    <scope>DISRUPTION PHENOTYPE</scope>
    <source>
        <strain>LT2</strain>
    </source>
</reference>
<reference key="6">
    <citation type="journal article" date="2015" name="PLoS Pathog.">
        <title>Ethanolamine Signaling Promotes Salmonella Niche Recognition and Adaptation during Infection.</title>
        <authorList>
            <person name="Anderson C.J."/>
            <person name="Clark D.E."/>
            <person name="Adli M."/>
            <person name="Kendall M.M."/>
        </authorList>
    </citation>
    <scope>EXPRESSION IN MOUSE INFECTION</scope>
    <source>
        <strain>SL1344</strain>
    </source>
</reference>
<reference key="7">
    <citation type="journal article" date="2015" name="PLoS Pathog.">
        <title>Correction: Ethanolamine Signaling Promotes Salmonella Niche Recognition and Adaptation during Infection.</title>
        <authorList>
            <person name="Anderson C.J."/>
            <person name="Clark D.E."/>
            <person name="Adli M."/>
            <person name="Kendall M.M."/>
        </authorList>
    </citation>
    <scope>ERRATUM OF PUBMED:26565973</scope>
</reference>
<reference key="8">
    <citation type="journal article" date="2012" name="PLoS ONE">
        <title>Engineered protein nano-compartments for targeted enzyme localization.</title>
        <authorList>
            <person name="Choudhary S."/>
            <person name="Quin M.B."/>
            <person name="Sanders M.A."/>
            <person name="Johnson E.T."/>
            <person name="Schmidt-Dannert C."/>
        </authorList>
    </citation>
    <scope>FUNCTION</scope>
    <scope>INTERACTION WITH EUTC</scope>
    <scope>SUBUNIT</scope>
    <scope>SUBCELLULAR LOCATION</scope>
    <scope>BIOTECHNOLOGY</scope>
    <scope>MUTAGENESIS OF GLY-39</scope>
    <source>
        <strain>LT2</strain>
    </source>
</reference>
<reference key="9">
    <citation type="journal article" date="2013" name="J. Bacteriol.">
        <title>Evidence that a metabolic microcompartment contains and recycles private cofactor pools.</title>
        <authorList>
            <person name="Huseby D.L."/>
            <person name="Roth J.R."/>
        </authorList>
    </citation>
    <scope>FUNCTION</scope>
    <source>
        <strain>LT2</strain>
    </source>
</reference>
<reference key="10">
    <citation type="journal article" date="2016" name="Sci. Rep.">
        <title>Engineering formation of multiple recombinant Eut protein nanocompartments in E. coli.</title>
        <authorList>
            <person name="Held M."/>
            <person name="Kolb A."/>
            <person name="Perdue S."/>
            <person name="Hsu S.Y."/>
            <person name="Bloch S.E."/>
            <person name="Quin M.B."/>
            <person name="Schmidt-Dannert C."/>
        </authorList>
    </citation>
    <scope>FUNCTION</scope>
    <scope>IDENTIFICATION BY MASS SPECTROMETRY</scope>
    <scope>SUBUNIT</scope>
    <scope>SUBCELLULAR LOCATION</scope>
    <scope>BIOTECHNOLOGY</scope>
    <source>
        <strain>LT2</strain>
    </source>
</reference>
<reference key="11">
    <citation type="journal article" date="2016" name="Appl. Microbiol. Biotechnol.">
        <title>Encapsulation of multiple cargo proteins within recombinant Eut nanocompartments.</title>
        <authorList>
            <person name="Quin M.B."/>
            <person name="Perdue S.A."/>
            <person name="Hsu S.Y."/>
            <person name="Schmidt-Dannert C."/>
        </authorList>
    </citation>
    <scope>FUNCTION</scope>
    <scope>INTERACTION WITH EUTE</scope>
    <scope>SUBUNIT</scope>
    <scope>SUBCELLULAR LOCATION</scope>
    <scope>DOMAIN</scope>
    <scope>MUTAGENESIS OF LEU-29 AND LYS-32</scope>
    <source>
        <strain>LT2</strain>
    </source>
</reference>
<reference key="12">
    <citation type="journal article" date="2018" name="Infect. Immun.">
        <title>The Ethanolamine Permease EutH Promotes Vacuole Adaptation of Salmonella enterica and Listeria monocytogenes during Macrophage Infection.</title>
        <authorList>
            <person name="Anderson C.J."/>
            <person name="Satkovich J."/>
            <person name="Koeseoglu V.K."/>
            <person name="Agaisse H."/>
            <person name="Kendall M.M."/>
        </authorList>
    </citation>
    <scope>FUNCTION</scope>
    <source>
        <strain>SL1344</strain>
    </source>
</reference>
<keyword id="KW-1283">Bacterial microcompartment</keyword>
<keyword id="KW-1185">Reference proteome</keyword>
<keyword id="KW-0843">Virulence</keyword>
<evidence type="ECO:0000250" key="1">
    <source>
        <dbReference type="UniProtKB" id="P63746"/>
    </source>
</evidence>
<evidence type="ECO:0000255" key="2">
    <source>
        <dbReference type="PROSITE-ProRule" id="PRU01279"/>
    </source>
</evidence>
<evidence type="ECO:0000269" key="3">
    <source>
    </source>
</evidence>
<evidence type="ECO:0000269" key="4">
    <source>
    </source>
</evidence>
<evidence type="ECO:0000269" key="5">
    <source>
    </source>
</evidence>
<evidence type="ECO:0000269" key="6">
    <source>
    </source>
</evidence>
<evidence type="ECO:0000269" key="7">
    <source>
    </source>
</evidence>
<evidence type="ECO:0000269" key="8">
    <source>
    </source>
</evidence>
<evidence type="ECO:0000269" key="9">
    <source>
    </source>
</evidence>
<evidence type="ECO:0000269" key="10">
    <source>
    </source>
</evidence>
<evidence type="ECO:0000269" key="11">
    <source>
    </source>
</evidence>
<evidence type="ECO:0000305" key="12"/>
<evidence type="ECO:0000305" key="13">
    <source>
    </source>
</evidence>
<evidence type="ECO:0000305" key="14">
    <source>
    </source>
</evidence>
<evidence type="ECO:0000305" key="15">
    <source>
    </source>
</evidence>
<evidence type="ECO:0000305" key="16">
    <source>
    </source>
</evidence>